<accession>Q92581</accession>
<accession>A6NIQ9</accession>
<accession>A8K160</accession>
<accession>B4DU30</accession>
<accession>B7ZAE0</accession>
<accession>Q3ZCW7</accession>
<accession>Q5JPP8</accession>
<accession>Q5JPP9</accession>
<accession>Q86VS0</accession>
<accession>Q8WYK8</accession>
<comment type="function">
    <text evidence="1 5 10 13 15 16">Endosomal Na(+), K(+)/H(+) antiporter (PubMed:15522866, PubMed:28635961, PubMed:31676550, PubMed:32277048). Mediates the electroneutral exchange of endosomal luminal H(+) for a cytosolic Na(+) or K(+). By facilitating proton efflux, SLC9A6 counteracts the acidity generated by vacuolar (V)-ATPase, thereby limiting luminal acidification. Responsible for alkalizing and maintaining the endosomal pH, and consequently in, e.g., endosome maturation and trafficking of recycling endosomal cargo (PubMed:15522866, PubMed:28635961, PubMed:31676550, PubMed:32277048). Plays a critical role during neurodevelopment by regulating synaptic development and plasticity (By similarity). Implicated in the maintenance of cell polarity in a manner that is dependent on its ability to modulate intravesicular pH (PubMed:20130086). Regulates intracelular pH in some specialized cells, osteoclasts and stereocilia where this transporter localizes to the plasma membrane (By similarity).</text>
</comment>
<comment type="catalytic activity">
    <reaction evidence="25">
        <text>Na(+)(in) + H(+)(out) = Na(+)(out) + H(+)(in)</text>
        <dbReference type="Rhea" id="RHEA:29419"/>
        <dbReference type="ChEBI" id="CHEBI:15378"/>
        <dbReference type="ChEBI" id="CHEBI:29101"/>
    </reaction>
</comment>
<comment type="catalytic activity">
    <reaction evidence="1">
        <text>K(+)(in) + H(+)(out) = K(+)(out) + H(+)(in)</text>
        <dbReference type="Rhea" id="RHEA:29467"/>
        <dbReference type="ChEBI" id="CHEBI:15378"/>
        <dbReference type="ChEBI" id="CHEBI:29103"/>
    </reaction>
</comment>
<comment type="subunit">
    <text evidence="7 13 14 16">Homodimer (PubMed:30296617, PubMed:32277048). Interacts with RACK1; regulates the distribution of SLC9A6 between endosomes and the plasma membrane (PubMed:18057008, PubMed:28635961).</text>
</comment>
<comment type="interaction">
    <interactant intactId="EBI-17198620">
        <id>Q92581-2</id>
    </interactant>
    <interactant intactId="EBI-1030755">
        <id>P15260</id>
        <label>IFNGR1</label>
    </interactant>
    <organismsDiffer>false</organismsDiffer>
    <experiments>3</experiments>
</comment>
<comment type="subcellular location">
    <subcellularLocation>
        <location evidence="3 4">Endosome membrane</location>
        <topology evidence="2">Multi-pass membrane protein</topology>
    </subcellularLocation>
    <subcellularLocation>
        <location evidence="4 7 13 14 16">Recycling endosome membrane</location>
        <topology evidence="2">Multi-pass membrane protein</topology>
    </subcellularLocation>
    <subcellularLocation>
        <location evidence="4 13">Early endosome membrane</location>
        <topology>Multi-pass membrane protein</topology>
    </subcellularLocation>
    <subcellularLocation>
        <location evidence="2">Late endosome membrane</location>
        <topology evidence="2">Multi-pass membrane protein</topology>
    </subcellularLocation>
    <subcellularLocation>
        <location evidence="4 13 14">Cell membrane</location>
        <topology evidence="2">Multi-pass membrane protein</topology>
    </subcellularLocation>
    <text evidence="1 4 13 14">Present predominantly in the recycling compartments including early and recycling endosomes, but undergoes plasma membrane localization during vesicular recycling, which is enhanced upon certain stimuli, such as hypoxia (PubMed:11940519, PubMed:28635961, PubMed:30296617). Has a major plasmalemmal distribution in a few specialized cells, such as in vestibular hair bundles and osteoblasts (By similarity).</text>
</comment>
<comment type="alternative products">
    <event type="alternative splicing"/>
    <isoform>
        <id>Q92581-2</id>
        <name>2</name>
        <name evidence="18">NHE6.1</name>
        <name evidence="20">NHE6v1</name>
        <sequence type="displayed"/>
    </isoform>
    <isoform>
        <id>Q92581-1</id>
        <name>1</name>
        <name>NHE6.0</name>
        <sequence type="described" ref="VSP_061774"/>
    </isoform>
    <isoform>
        <id>Q92581-3</id>
        <name>3</name>
        <sequence type="described" ref="VSP_044868"/>
    </isoform>
</comment>
<comment type="tissue specificity">
    <text evidence="17">Ubiquitous. High expression in brain, skeletal muscle, and heart, but is also detected at lower levels in most other tissues.</text>
</comment>
<comment type="PTM">
    <text evidence="14">Ubiquitinated (in vitro).</text>
</comment>
<comment type="PTM">
    <text evidence="16">Glycosylated.</text>
</comment>
<comment type="disease" evidence="8 11 12 14 16">
    <disease id="DI-01965">
        <name>Intellectual developmental disorder, X-linked, syndromic, Christianson type</name>
        <acronym>MRXSCH</acronym>
        <description>A syndrome characterized by profound intellectual disability, epilepsy, ataxia, and microcephaly. It shows phenotypic overlap with Angelman syndrome.</description>
        <dbReference type="MIM" id="300243"/>
    </disease>
    <text>The disease is caused by variants affecting the gene represented in this entry.</text>
</comment>
<comment type="similarity">
    <text evidence="23">Belongs to the monovalent cation:proton antiporter 1 (CPA1) transporter (TC 2.A.36) family.</text>
</comment>
<comment type="caution">
    <text evidence="3 24 26">Was originally (PubMed:9507001) identified as a mitochondrial inner membrane protein, but was later shown to be localized in early and recycling endosomes and not mitochondria (PubMed:11641397, PubMed:11940519).</text>
</comment>
<feature type="chain" id="PRO_0000052362" description="Sodium/hydrogen exchanger 6">
    <location>
        <begin position="1"/>
        <end position="701"/>
    </location>
</feature>
<feature type="transmembrane region" description="Helical; Name=1" evidence="2">
    <location>
        <begin position="71"/>
        <end position="91"/>
    </location>
</feature>
<feature type="transmembrane region" description="Helical; Name=2" evidence="2">
    <location>
        <begin position="103"/>
        <end position="123"/>
    </location>
</feature>
<feature type="transmembrane region" description="Helical; Name=3" evidence="2">
    <location>
        <begin position="176"/>
        <end position="196"/>
    </location>
</feature>
<feature type="transmembrane region" description="Helical; Name=4" evidence="2">
    <location>
        <begin position="211"/>
        <end position="231"/>
    </location>
</feature>
<feature type="transmembrane region" description="Helical; Name=5" evidence="2">
    <location>
        <begin position="252"/>
        <end position="272"/>
    </location>
</feature>
<feature type="transmembrane region" description="Helical; Name=6" evidence="2">
    <location>
        <begin position="278"/>
        <end position="298"/>
    </location>
</feature>
<feature type="transmembrane region" description="Helical; Name=7" evidence="2">
    <location>
        <begin position="324"/>
        <end position="344"/>
    </location>
</feature>
<feature type="transmembrane region" description="Helical; Name=8" evidence="2">
    <location>
        <begin position="372"/>
        <end position="392"/>
    </location>
</feature>
<feature type="transmembrane region" description="Helical; Name=9" evidence="2">
    <location>
        <begin position="414"/>
        <end position="434"/>
    </location>
</feature>
<feature type="transmembrane region" description="Helical; Name=10" evidence="2">
    <location>
        <begin position="436"/>
        <end position="456"/>
    </location>
</feature>
<feature type="transmembrane region" description="Helical; Name=11" evidence="2">
    <location>
        <begin position="479"/>
        <end position="499"/>
    </location>
</feature>
<feature type="transmembrane region" description="Helical; Name=12" evidence="2">
    <location>
        <begin position="515"/>
        <end position="535"/>
    </location>
</feature>
<feature type="glycosylation site" description="N-linked (GlcNAc...) asparagine" evidence="9">
    <location>
        <position position="128"/>
    </location>
</feature>
<feature type="cross-link" description="Glycyl lysine isopeptide (Lys-Gly) (interchain with G-Cter in ubiquitin)" evidence="6">
    <location>
        <position position="475"/>
    </location>
</feature>
<feature type="splice variant" id="VSP_044868" description="In isoform 3." evidence="19">
    <location>
        <begin position="1"/>
        <end position="52"/>
    </location>
</feature>
<feature type="splice variant" id="VSP_061774" description="In isoform 1." evidence="21 22">
    <location>
        <begin position="144"/>
        <end position="175"/>
    </location>
</feature>
<feature type="sequence variant" id="VAR_087516" description="Does not affect post-translational maturation; does not affect membrane sorting; does not affect pH homeostasis in recycling endosomes; does not affect cargo trafficking; dbSNP:rs201523857." evidence="15 16">
    <original>A</original>
    <variation>S</variation>
    <location>
        <position position="9"/>
    </location>
</feature>
<feature type="sequence variant" id="VAR_087517" description="In MRXSCH; reduces oligosaccharide maturation; decreases protein stability; partially accumulated in the ER; impairs acidification of endosomes; reduces localization to recycling endosomes; impairs trafficking to plasma membrane; reduces uptake of recycling endosomal cargo." evidence="12 16">
    <original>L</original>
    <variation>P</variation>
    <location>
        <position position="188"/>
    </location>
</feature>
<feature type="sequence variant" id="VAR_083536" description="In MRXSCH; decreases protein stability; increased ubiquitination; impairs acidification of endosomes; reduces localization to recycling endosomes; impairs trafficking to plasma membrane; reduces uptake of recycling endosomal cargo." evidence="14">
    <original>G</original>
    <variation>R</variation>
    <location>
        <position position="218"/>
    </location>
</feature>
<feature type="sequence variant" id="VAR_087518" description="In MRXSCH; reduces oligosaccharide maturation; decreases protein stability; partially accumulated in the ER; impairs acidification of endosomes; reduces localization to recycling endosomes; impairs trafficking to plasma membrane; reduces uptake of recycling endosomal cargo." evidence="12 16">
    <original>G</original>
    <variation>D</variation>
    <location>
        <position position="383"/>
    </location>
</feature>
<feature type="sequence variant" id="VAR_087519" description="In MRXSCH; reduces oligosaccharide maturation; largely retained in the ER; strongly reduces localization to recycling endosomes; strongly impairs trafficking to plasma membrane; strongly reduces uptake of recycling endosomal cargo." evidence="11 12 16">
    <location>
        <begin position="547"/>
        <end position="701"/>
    </location>
</feature>
<feature type="sequence variant" id="VAR_087520" description="Does not affect post-translational maturation; does not affect membrane sorting, does not affect pH homeostasis in recycling endosomes, does not affect cargo trafficking; dbSNP:rs146263125." evidence="16">
    <original>R</original>
    <variation>Q</variation>
    <location>
        <position position="568"/>
    </location>
</feature>
<feature type="sequence variant" id="VAR_087521" description="In MRXSCH; reduces oligosaccharide maturation; largely retained in the ER; strongly reduces localization to recycling endosomes; strongly impairs trafficking to plasma membrane; strongly reduces uptake of recycling endosomal cargo." evidence="12 16">
    <location>
        <begin position="570"/>
        <end position="701"/>
    </location>
</feature>
<feature type="sequence conflict" description="In Ref. 4; AAH35029." evidence="23" ref="4">
    <original>R</original>
    <variation>G</variation>
    <location>
        <position position="20"/>
    </location>
</feature>
<feature type="sequence conflict" description="In Ref. 2; BAF82464." evidence="23" ref="2">
    <original>K</original>
    <variation>E</variation>
    <location>
        <position position="92"/>
    </location>
</feature>
<feature type="sequence conflict" description="In Ref. 2; BAH14626." evidence="23" ref="2">
    <original>V</original>
    <variation>I</variation>
    <location>
        <position position="144"/>
    </location>
</feature>
<feature type="sequence conflict" description="In Ref. 2; BAH14626." evidence="23" ref="2">
    <original>A</original>
    <variation>T</variation>
    <location>
        <position position="339"/>
    </location>
</feature>
<feature type="sequence conflict" description="In Ref. 2; BAF82464." evidence="23" ref="2">
    <original>T</original>
    <variation>M</variation>
    <location>
        <position position="404"/>
    </location>
</feature>
<feature type="sequence conflict" description="In Ref. 2; BAG62192." evidence="23" ref="2">
    <original>E</original>
    <variation>G</variation>
    <location>
        <position position="405"/>
    </location>
</feature>
<feature type="sequence conflict" description="In Ref. 2; BAF82464." evidence="23" ref="2">
    <original>A</original>
    <variation>S</variation>
    <location>
        <position position="666"/>
    </location>
</feature>
<name>SL9A6_HUMAN</name>
<reference key="1">
    <citation type="journal article" date="1998" name="J. Biol. Chem.">
        <title>Identification of a mitochondrial Na+/H+ exchanger.</title>
        <authorList>
            <person name="Numata M."/>
            <person name="Petrecca K."/>
            <person name="Lake N."/>
            <person name="Orlowski J."/>
        </authorList>
    </citation>
    <scope>NUCLEOTIDE SEQUENCE [MRNA] (ISOFORM 1)</scope>
    <scope>TISSUE SPECIFICITY</scope>
</reference>
<reference key="2">
    <citation type="journal article" date="2004" name="Nat. Genet.">
        <title>Complete sequencing and characterization of 21,243 full-length human cDNAs.</title>
        <authorList>
            <person name="Ota T."/>
            <person name="Suzuki Y."/>
            <person name="Nishikawa T."/>
            <person name="Otsuki T."/>
            <person name="Sugiyama T."/>
            <person name="Irie R."/>
            <person name="Wakamatsu A."/>
            <person name="Hayashi K."/>
            <person name="Sato H."/>
            <person name="Nagai K."/>
            <person name="Kimura K."/>
            <person name="Makita H."/>
            <person name="Sekine M."/>
            <person name="Obayashi M."/>
            <person name="Nishi T."/>
            <person name="Shibahara T."/>
            <person name="Tanaka T."/>
            <person name="Ishii S."/>
            <person name="Yamamoto J."/>
            <person name="Saito K."/>
            <person name="Kawai Y."/>
            <person name="Isono Y."/>
            <person name="Nakamura Y."/>
            <person name="Nagahari K."/>
            <person name="Murakami K."/>
            <person name="Yasuda T."/>
            <person name="Iwayanagi T."/>
            <person name="Wagatsuma M."/>
            <person name="Shiratori A."/>
            <person name="Sudo H."/>
            <person name="Hosoiri T."/>
            <person name="Kaku Y."/>
            <person name="Kodaira H."/>
            <person name="Kondo H."/>
            <person name="Sugawara M."/>
            <person name="Takahashi M."/>
            <person name="Kanda K."/>
            <person name="Yokoi T."/>
            <person name="Furuya T."/>
            <person name="Kikkawa E."/>
            <person name="Omura Y."/>
            <person name="Abe K."/>
            <person name="Kamihara K."/>
            <person name="Katsuta N."/>
            <person name="Sato K."/>
            <person name="Tanikawa M."/>
            <person name="Yamazaki M."/>
            <person name="Ninomiya K."/>
            <person name="Ishibashi T."/>
            <person name="Yamashita H."/>
            <person name="Murakawa K."/>
            <person name="Fujimori K."/>
            <person name="Tanai H."/>
            <person name="Kimata M."/>
            <person name="Watanabe M."/>
            <person name="Hiraoka S."/>
            <person name="Chiba Y."/>
            <person name="Ishida S."/>
            <person name="Ono Y."/>
            <person name="Takiguchi S."/>
            <person name="Watanabe S."/>
            <person name="Yosida M."/>
            <person name="Hotuta T."/>
            <person name="Kusano J."/>
            <person name="Kanehori K."/>
            <person name="Takahashi-Fujii A."/>
            <person name="Hara H."/>
            <person name="Tanase T.-O."/>
            <person name="Nomura Y."/>
            <person name="Togiya S."/>
            <person name="Komai F."/>
            <person name="Hara R."/>
            <person name="Takeuchi K."/>
            <person name="Arita M."/>
            <person name="Imose N."/>
            <person name="Musashino K."/>
            <person name="Yuuki H."/>
            <person name="Oshima A."/>
            <person name="Sasaki N."/>
            <person name="Aotsuka S."/>
            <person name="Yoshikawa Y."/>
            <person name="Matsunawa H."/>
            <person name="Ichihara T."/>
            <person name="Shiohata N."/>
            <person name="Sano S."/>
            <person name="Moriya S."/>
            <person name="Momiyama H."/>
            <person name="Satoh N."/>
            <person name="Takami S."/>
            <person name="Terashima Y."/>
            <person name="Suzuki O."/>
            <person name="Nakagawa S."/>
            <person name="Senoh A."/>
            <person name="Mizoguchi H."/>
            <person name="Goto Y."/>
            <person name="Shimizu F."/>
            <person name="Wakebe H."/>
            <person name="Hishigaki H."/>
            <person name="Watanabe T."/>
            <person name="Sugiyama A."/>
            <person name="Takemoto M."/>
            <person name="Kawakami B."/>
            <person name="Yamazaki M."/>
            <person name="Watanabe K."/>
            <person name="Kumagai A."/>
            <person name="Itakura S."/>
            <person name="Fukuzumi Y."/>
            <person name="Fujimori Y."/>
            <person name="Komiyama M."/>
            <person name="Tashiro H."/>
            <person name="Tanigami A."/>
            <person name="Fujiwara T."/>
            <person name="Ono T."/>
            <person name="Yamada K."/>
            <person name="Fujii Y."/>
            <person name="Ozaki K."/>
            <person name="Hirao M."/>
            <person name="Ohmori Y."/>
            <person name="Kawabata A."/>
            <person name="Hikiji T."/>
            <person name="Kobatake N."/>
            <person name="Inagaki H."/>
            <person name="Ikema Y."/>
            <person name="Okamoto S."/>
            <person name="Okitani R."/>
            <person name="Kawakami T."/>
            <person name="Noguchi S."/>
            <person name="Itoh T."/>
            <person name="Shigeta K."/>
            <person name="Senba T."/>
            <person name="Matsumura K."/>
            <person name="Nakajima Y."/>
            <person name="Mizuno T."/>
            <person name="Morinaga M."/>
            <person name="Sasaki M."/>
            <person name="Togashi T."/>
            <person name="Oyama M."/>
            <person name="Hata H."/>
            <person name="Watanabe M."/>
            <person name="Komatsu T."/>
            <person name="Mizushima-Sugano J."/>
            <person name="Satoh T."/>
            <person name="Shirai Y."/>
            <person name="Takahashi Y."/>
            <person name="Nakagawa K."/>
            <person name="Okumura K."/>
            <person name="Nagase T."/>
            <person name="Nomura N."/>
            <person name="Kikuchi H."/>
            <person name="Masuho Y."/>
            <person name="Yamashita R."/>
            <person name="Nakai K."/>
            <person name="Yada T."/>
            <person name="Nakamura Y."/>
            <person name="Ohara O."/>
            <person name="Isogai T."/>
            <person name="Sugano S."/>
        </authorList>
    </citation>
    <scope>NUCLEOTIDE SEQUENCE [LARGE SCALE MRNA] (ISOFORMS 2 AND 3)</scope>
    <source>
        <tissue>Brain</tissue>
        <tissue>Placenta</tissue>
    </source>
</reference>
<reference key="3">
    <citation type="journal article" date="2005" name="Nature">
        <title>The DNA sequence of the human X chromosome.</title>
        <authorList>
            <person name="Ross M.T."/>
            <person name="Grafham D.V."/>
            <person name="Coffey A.J."/>
            <person name="Scherer S."/>
            <person name="McLay K."/>
            <person name="Muzny D."/>
            <person name="Platzer M."/>
            <person name="Howell G.R."/>
            <person name="Burrows C."/>
            <person name="Bird C.P."/>
            <person name="Frankish A."/>
            <person name="Lovell F.L."/>
            <person name="Howe K.L."/>
            <person name="Ashurst J.L."/>
            <person name="Fulton R.S."/>
            <person name="Sudbrak R."/>
            <person name="Wen G."/>
            <person name="Jones M.C."/>
            <person name="Hurles M.E."/>
            <person name="Andrews T.D."/>
            <person name="Scott C.E."/>
            <person name="Searle S."/>
            <person name="Ramser J."/>
            <person name="Whittaker A."/>
            <person name="Deadman R."/>
            <person name="Carter N.P."/>
            <person name="Hunt S.E."/>
            <person name="Chen R."/>
            <person name="Cree A."/>
            <person name="Gunaratne P."/>
            <person name="Havlak P."/>
            <person name="Hodgson A."/>
            <person name="Metzker M.L."/>
            <person name="Richards S."/>
            <person name="Scott G."/>
            <person name="Steffen D."/>
            <person name="Sodergren E."/>
            <person name="Wheeler D.A."/>
            <person name="Worley K.C."/>
            <person name="Ainscough R."/>
            <person name="Ambrose K.D."/>
            <person name="Ansari-Lari M.A."/>
            <person name="Aradhya S."/>
            <person name="Ashwell R.I."/>
            <person name="Babbage A.K."/>
            <person name="Bagguley C.L."/>
            <person name="Ballabio A."/>
            <person name="Banerjee R."/>
            <person name="Barker G.E."/>
            <person name="Barlow K.F."/>
            <person name="Barrett I.P."/>
            <person name="Bates K.N."/>
            <person name="Beare D.M."/>
            <person name="Beasley H."/>
            <person name="Beasley O."/>
            <person name="Beck A."/>
            <person name="Bethel G."/>
            <person name="Blechschmidt K."/>
            <person name="Brady N."/>
            <person name="Bray-Allen S."/>
            <person name="Bridgeman A.M."/>
            <person name="Brown A.J."/>
            <person name="Brown M.J."/>
            <person name="Bonnin D."/>
            <person name="Bruford E.A."/>
            <person name="Buhay C."/>
            <person name="Burch P."/>
            <person name="Burford D."/>
            <person name="Burgess J."/>
            <person name="Burrill W."/>
            <person name="Burton J."/>
            <person name="Bye J.M."/>
            <person name="Carder C."/>
            <person name="Carrel L."/>
            <person name="Chako J."/>
            <person name="Chapman J.C."/>
            <person name="Chavez D."/>
            <person name="Chen E."/>
            <person name="Chen G."/>
            <person name="Chen Y."/>
            <person name="Chen Z."/>
            <person name="Chinault C."/>
            <person name="Ciccodicola A."/>
            <person name="Clark S.Y."/>
            <person name="Clarke G."/>
            <person name="Clee C.M."/>
            <person name="Clegg S."/>
            <person name="Clerc-Blankenburg K."/>
            <person name="Clifford K."/>
            <person name="Cobley V."/>
            <person name="Cole C.G."/>
            <person name="Conquer J.S."/>
            <person name="Corby N."/>
            <person name="Connor R.E."/>
            <person name="David R."/>
            <person name="Davies J."/>
            <person name="Davis C."/>
            <person name="Davis J."/>
            <person name="Delgado O."/>
            <person name="Deshazo D."/>
            <person name="Dhami P."/>
            <person name="Ding Y."/>
            <person name="Dinh H."/>
            <person name="Dodsworth S."/>
            <person name="Draper H."/>
            <person name="Dugan-Rocha S."/>
            <person name="Dunham A."/>
            <person name="Dunn M."/>
            <person name="Durbin K.J."/>
            <person name="Dutta I."/>
            <person name="Eades T."/>
            <person name="Ellwood M."/>
            <person name="Emery-Cohen A."/>
            <person name="Errington H."/>
            <person name="Evans K.L."/>
            <person name="Faulkner L."/>
            <person name="Francis F."/>
            <person name="Frankland J."/>
            <person name="Fraser A.E."/>
            <person name="Galgoczy P."/>
            <person name="Gilbert J."/>
            <person name="Gill R."/>
            <person name="Gloeckner G."/>
            <person name="Gregory S.G."/>
            <person name="Gribble S."/>
            <person name="Griffiths C."/>
            <person name="Grocock R."/>
            <person name="Gu Y."/>
            <person name="Gwilliam R."/>
            <person name="Hamilton C."/>
            <person name="Hart E.A."/>
            <person name="Hawes A."/>
            <person name="Heath P.D."/>
            <person name="Heitmann K."/>
            <person name="Hennig S."/>
            <person name="Hernandez J."/>
            <person name="Hinzmann B."/>
            <person name="Ho S."/>
            <person name="Hoffs M."/>
            <person name="Howden P.J."/>
            <person name="Huckle E.J."/>
            <person name="Hume J."/>
            <person name="Hunt P.J."/>
            <person name="Hunt A.R."/>
            <person name="Isherwood J."/>
            <person name="Jacob L."/>
            <person name="Johnson D."/>
            <person name="Jones S."/>
            <person name="de Jong P.J."/>
            <person name="Joseph S.S."/>
            <person name="Keenan S."/>
            <person name="Kelly S."/>
            <person name="Kershaw J.K."/>
            <person name="Khan Z."/>
            <person name="Kioschis P."/>
            <person name="Klages S."/>
            <person name="Knights A.J."/>
            <person name="Kosiura A."/>
            <person name="Kovar-Smith C."/>
            <person name="Laird G.K."/>
            <person name="Langford C."/>
            <person name="Lawlor S."/>
            <person name="Leversha M."/>
            <person name="Lewis L."/>
            <person name="Liu W."/>
            <person name="Lloyd C."/>
            <person name="Lloyd D.M."/>
            <person name="Loulseged H."/>
            <person name="Loveland J.E."/>
            <person name="Lovell J.D."/>
            <person name="Lozado R."/>
            <person name="Lu J."/>
            <person name="Lyne R."/>
            <person name="Ma J."/>
            <person name="Maheshwari M."/>
            <person name="Matthews L.H."/>
            <person name="McDowall J."/>
            <person name="McLaren S."/>
            <person name="McMurray A."/>
            <person name="Meidl P."/>
            <person name="Meitinger T."/>
            <person name="Milne S."/>
            <person name="Miner G."/>
            <person name="Mistry S.L."/>
            <person name="Morgan M."/>
            <person name="Morris S."/>
            <person name="Mueller I."/>
            <person name="Mullikin J.C."/>
            <person name="Nguyen N."/>
            <person name="Nordsiek G."/>
            <person name="Nyakatura G."/>
            <person name="O'dell C.N."/>
            <person name="Okwuonu G."/>
            <person name="Palmer S."/>
            <person name="Pandian R."/>
            <person name="Parker D."/>
            <person name="Parrish J."/>
            <person name="Pasternak S."/>
            <person name="Patel D."/>
            <person name="Pearce A.V."/>
            <person name="Pearson D.M."/>
            <person name="Pelan S.E."/>
            <person name="Perez L."/>
            <person name="Porter K.M."/>
            <person name="Ramsey Y."/>
            <person name="Reichwald K."/>
            <person name="Rhodes S."/>
            <person name="Ridler K.A."/>
            <person name="Schlessinger D."/>
            <person name="Schueler M.G."/>
            <person name="Sehra H.K."/>
            <person name="Shaw-Smith C."/>
            <person name="Shen H."/>
            <person name="Sheridan E.M."/>
            <person name="Shownkeen R."/>
            <person name="Skuce C.D."/>
            <person name="Smith M.L."/>
            <person name="Sotheran E.C."/>
            <person name="Steingruber H.E."/>
            <person name="Steward C.A."/>
            <person name="Storey R."/>
            <person name="Swann R.M."/>
            <person name="Swarbreck D."/>
            <person name="Tabor P.E."/>
            <person name="Taudien S."/>
            <person name="Taylor T."/>
            <person name="Teague B."/>
            <person name="Thomas K."/>
            <person name="Thorpe A."/>
            <person name="Timms K."/>
            <person name="Tracey A."/>
            <person name="Trevanion S."/>
            <person name="Tromans A.C."/>
            <person name="d'Urso M."/>
            <person name="Verduzco D."/>
            <person name="Villasana D."/>
            <person name="Waldron L."/>
            <person name="Wall M."/>
            <person name="Wang Q."/>
            <person name="Warren J."/>
            <person name="Warry G.L."/>
            <person name="Wei X."/>
            <person name="West A."/>
            <person name="Whitehead S.L."/>
            <person name="Whiteley M.N."/>
            <person name="Wilkinson J.E."/>
            <person name="Willey D.L."/>
            <person name="Williams G."/>
            <person name="Williams L."/>
            <person name="Williamson A."/>
            <person name="Williamson H."/>
            <person name="Wilming L."/>
            <person name="Woodmansey R.L."/>
            <person name="Wray P.W."/>
            <person name="Yen J."/>
            <person name="Zhang J."/>
            <person name="Zhou J."/>
            <person name="Zoghbi H."/>
            <person name="Zorilla S."/>
            <person name="Buck D."/>
            <person name="Reinhardt R."/>
            <person name="Poustka A."/>
            <person name="Rosenthal A."/>
            <person name="Lehrach H."/>
            <person name="Meindl A."/>
            <person name="Minx P.J."/>
            <person name="Hillier L.W."/>
            <person name="Willard H.F."/>
            <person name="Wilson R.K."/>
            <person name="Waterston R.H."/>
            <person name="Rice C.M."/>
            <person name="Vaudin M."/>
            <person name="Coulson A."/>
            <person name="Nelson D.L."/>
            <person name="Weinstock G."/>
            <person name="Sulston J.E."/>
            <person name="Durbin R.M."/>
            <person name="Hubbard T."/>
            <person name="Gibbs R.A."/>
            <person name="Beck S."/>
            <person name="Rogers J."/>
            <person name="Bentley D.R."/>
        </authorList>
    </citation>
    <scope>NUCLEOTIDE SEQUENCE [LARGE SCALE GENOMIC DNA]</scope>
</reference>
<reference key="4">
    <citation type="journal article" date="2004" name="Genome Res.">
        <title>The status, quality, and expansion of the NIH full-length cDNA project: the Mammalian Gene Collection (MGC).</title>
        <authorList>
            <consortium name="The MGC Project Team"/>
        </authorList>
    </citation>
    <scope>NUCLEOTIDE SEQUENCE [LARGE SCALE MRNA] (ISOFORM 2)</scope>
    <source>
        <tissue>Brain</tissue>
    </source>
</reference>
<reference key="5">
    <citation type="journal article" date="1996" name="DNA Res.">
        <title>Prediction of the coding sequences of unidentified human genes. VI. The coding sequences of 80 new genes (KIAA0201-KIAA0280) deduced by analysis of cDNA clones from cell line KG-1 and brain.</title>
        <authorList>
            <person name="Nagase T."/>
            <person name="Seki N."/>
            <person name="Ishikawa K."/>
            <person name="Ohira M."/>
            <person name="Kawarabayasi Y."/>
            <person name="Ohara O."/>
            <person name="Tanaka A."/>
            <person name="Kotani H."/>
            <person name="Miyajima N."/>
            <person name="Nomura N."/>
        </authorList>
    </citation>
    <scope>NUCLEOTIDE SEQUENCE [LARGE SCALE MRNA] OF 4-669 (ISOFORM 1)</scope>
    <source>
        <tissue>Bone marrow</tissue>
    </source>
</reference>
<reference key="6">
    <citation type="journal article" date="2001" name="J. Biol. Chem.">
        <title>NHE6 protein possesses a signal peptide destined for endoplasmic reticulum membrane and localizes in secretory organelles of the cell.</title>
        <authorList>
            <person name="Miyazaki E."/>
            <person name="Sakaguchi M."/>
            <person name="Wakabayashi S."/>
            <person name="Shigekawa M."/>
            <person name="Mihara K."/>
        </authorList>
    </citation>
    <scope>NUCLEOTIDE SEQUENCE [MRNA] OF 1-342 (ISOFORM 2)</scope>
    <scope>SUBCELLULAR LOCATION</scope>
</reference>
<reference key="7">
    <citation type="journal article" date="2002" name="Am. J. Physiol.">
        <title>Human Na(+)/H(+) exchanger isoform 6 is found in recycling endosomes of cells, not in mitochondria.</title>
        <authorList>
            <person name="Brett C.L."/>
            <person name="Wei Y."/>
            <person name="Donowitz M."/>
            <person name="Rao R."/>
        </authorList>
    </citation>
    <scope>SUBCELLULAR LOCATION</scope>
</reference>
<reference key="8">
    <citation type="journal article" date="2005" name="J. Biol. Chem.">
        <title>Four Na+/H+ exchanger isoforms are distributed to Golgi and post-Golgi Compartments and are involved in organelle pH regulation.</title>
        <authorList>
            <person name="Nakamura N."/>
            <person name="Tanaka S."/>
            <person name="Teko Y."/>
            <person name="Mitsui K."/>
            <person name="Kanazawa H."/>
        </authorList>
    </citation>
    <scope>SUBCELLULAR LOCATION</scope>
    <scope>FUNCTION</scope>
</reference>
<reference key="9">
    <citation type="journal article" date="2007" name="Proteomics">
        <title>Tryptic digestion of ubiquitin standards reveals an improved strategy for identifying ubiquitinated proteins by mass spectrometry.</title>
        <authorList>
            <person name="Denis N.J."/>
            <person name="Vasilescu J."/>
            <person name="Lambert J.-P."/>
            <person name="Smith J.C."/>
            <person name="Figeys D."/>
        </authorList>
    </citation>
    <scope>UBIQUITINATION [LARGE SCALE ANALYSIS] AT LYS-475</scope>
    <scope>IDENTIFICATION BY MASS SPECTROMETRY</scope>
    <source>
        <tissue>Mammary cancer</tissue>
    </source>
</reference>
<reference key="10">
    <citation type="journal article" date="2008" name="J. Biol. Chem.">
        <title>Cell surface levels of organellar Na+/H+ exchanger isoform 6 are regulated by interaction with RACK1.</title>
        <authorList>
            <person name="Ohgaki R."/>
            <person name="Fukura N."/>
            <person name="Matsushita M."/>
            <person name="Mitsui K."/>
            <person name="Kanazawa H."/>
        </authorList>
    </citation>
    <scope>INTERACTION WITH RACK1</scope>
    <scope>SUBCELLULAR LOCATION</scope>
</reference>
<reference key="11">
    <citation type="journal article" date="2009" name="J. Proteome Res.">
        <title>Glycoproteomics analysis of human liver tissue by combination of multiple enzyme digestion and hydrazide chemistry.</title>
        <authorList>
            <person name="Chen R."/>
            <person name="Jiang X."/>
            <person name="Sun D."/>
            <person name="Han G."/>
            <person name="Wang F."/>
            <person name="Ye M."/>
            <person name="Wang L."/>
            <person name="Zou H."/>
        </authorList>
    </citation>
    <scope>GLYCOSYLATION [LARGE SCALE ANALYSIS] AT ASN-128</scope>
    <source>
        <tissue>Liver</tissue>
    </source>
</reference>
<reference key="12">
    <citation type="journal article" date="2014" name="J. Proteomics">
        <title>An enzyme assisted RP-RPLC approach for in-depth analysis of human liver phosphoproteome.</title>
        <authorList>
            <person name="Bian Y."/>
            <person name="Song C."/>
            <person name="Cheng K."/>
            <person name="Dong M."/>
            <person name="Wang F."/>
            <person name="Huang J."/>
            <person name="Sun D."/>
            <person name="Wang L."/>
            <person name="Ye M."/>
            <person name="Zou H."/>
        </authorList>
    </citation>
    <scope>IDENTIFICATION BY MASS SPECTROMETRY [LARGE SCALE ANALYSIS]</scope>
    <source>
        <tissue>Liver</tissue>
    </source>
</reference>
<reference key="13">
    <citation type="journal article" date="2010" name="Mol. Biol. Cell">
        <title>The Na+/H+ exchanger NHE6 in the endosomal recycling system is involved in the development of apical bile canalicular surface domains in HepG2 cells.</title>
        <authorList>
            <person name="Ohgaki R."/>
            <person name="Matsushita M."/>
            <person name="Kanazawa H."/>
            <person name="Ogihara S."/>
            <person name="Hoekstra D."/>
            <person name="van Ijzendoorn S.C."/>
        </authorList>
    </citation>
    <scope>FUNCTION</scope>
</reference>
<reference key="14">
    <citation type="journal article" date="2008" name="Am. J. Hum. Genet.">
        <title>SLC9A6 mutations cause X-linked mental retardation, microcephaly, epilepsy, and ataxia, a phenotype mimicking Angelman syndrome.</title>
        <authorList>
            <person name="Gilfillan G.D."/>
            <person name="Selmer K.K."/>
            <person name="Roxrud I."/>
            <person name="Smith R."/>
            <person name="Kyllerman M."/>
            <person name="Eiklid K."/>
            <person name="Kroken M."/>
            <person name="Mattingsdal M."/>
            <person name="Egeland T."/>
            <person name="Stenmark H."/>
            <person name="Sjoholm H."/>
            <person name="Server A."/>
            <person name="Samuelsson L."/>
            <person name="Christianson A."/>
            <person name="Tarpey P."/>
            <person name="Whibley A."/>
            <person name="Stratton M.R."/>
            <person name="Futreal P.A."/>
            <person name="Teague J."/>
            <person name="Edkins S."/>
            <person name="Gecz J."/>
            <person name="Turner G."/>
            <person name="Raymond F.L."/>
            <person name="Schwartz C."/>
            <person name="Stevenson R.E."/>
            <person name="Undlien D.E."/>
            <person name="Stromme P."/>
        </authorList>
    </citation>
    <scope>INVOLVEMENT IN MRXSCH</scope>
</reference>
<reference key="15">
    <citation type="journal article" date="2013" name="J. Med. Genet.">
        <title>Identification of pathogenic gene variants in small families with intellectually disabled siblings by exome sequencing.</title>
        <authorList>
            <person name="Schuurs-Hoeijmakers J.H."/>
            <person name="Vulto-van Silfhout A.T."/>
            <person name="Vissers L.E."/>
            <person name="van de Vondervoort I.I."/>
            <person name="van Bon B.W."/>
            <person name="de Ligt J."/>
            <person name="Gilissen C."/>
            <person name="Hehir-Kwa J.Y."/>
            <person name="Neveling K."/>
            <person name="del Rosario M."/>
            <person name="Hira G."/>
            <person name="Reitano S."/>
            <person name="Vitello A."/>
            <person name="Failla P."/>
            <person name="Greco D."/>
            <person name="Fichera M."/>
            <person name="Galesi O."/>
            <person name="Kleefstra T."/>
            <person name="Greally M.T."/>
            <person name="Ockeloen C.W."/>
            <person name="Willemsen M.H."/>
            <person name="Bongers E.M."/>
            <person name="Janssen I.M."/>
            <person name="Pfundt R."/>
            <person name="Veltman J.A."/>
            <person name="Romano C."/>
            <person name="Willemsen M.A."/>
            <person name="van Bokhoven H."/>
            <person name="Brunner H.G."/>
            <person name="de Vries B.B."/>
            <person name="de Brouwer A.P."/>
        </authorList>
    </citation>
    <scope>INVOLVEMENT IN MRXSCH</scope>
    <scope>VARIANT MRXSCH 547-GLU--ALA-701 DEL</scope>
</reference>
<reference key="16">
    <citation type="journal article" date="2017" name="Nat. Commun.">
        <title>Hypoxia-induced mobilization of NHE6 to the plasma membrane triggers endosome hyperacidification and chemoresistance.</title>
        <authorList>
            <person name="Lucien F."/>
            <person name="Pelletier P.P."/>
            <person name="Lavoie R.R."/>
            <person name="Lacroix J.M."/>
            <person name="Roy S."/>
            <person name="Parent J.L."/>
            <person name="Arsenault D."/>
            <person name="Harper K."/>
            <person name="Dubois C.M."/>
        </authorList>
    </citation>
    <scope>SUBCELLULAR LOCATION</scope>
    <scope>FUNCTION</scope>
    <scope>INTERACTION WITH RACK1</scope>
</reference>
<reference key="17">
    <citation type="journal article" date="2014" name="Ann. Neurol.">
        <title>Genetic and phenotypic diversity of NHE6 mutations in Christianson syndrome.</title>
        <authorList>
            <person name="Pescosolido M.F."/>
            <person name="Stein D.M."/>
            <person name="Schmidt M."/>
            <person name="El Achkar C.M."/>
            <person name="Sabbagh M."/>
            <person name="Rogg J.M."/>
            <person name="Tantravahi U."/>
            <person name="McLean R.L."/>
            <person name="Liu J.S."/>
            <person name="Poduri A."/>
            <person name="Morrow E.M."/>
        </authorList>
    </citation>
    <scope>VARIANTS MRXSCH PRO-188; ASP-383; 547-GLU--ALA-701 DEL AND 570-TRP--ALA-701 DEL</scope>
</reference>
<reference key="18">
    <citation type="journal article" date="2019" name="Neurobiol. Dis.">
        <title>A potential gain-of-function variant of SLC9A6 leads to endosomal alkalinization and neuronal atrophy associated with Christianson Syndrome.</title>
        <authorList>
            <person name="Ilie A."/>
            <person name="Gao A.Y.L."/>
            <person name="Boucher A."/>
            <person name="Park J."/>
            <person name="Berghuis A.M."/>
            <person name="Hoffer M.J.V."/>
            <person name="Hilhorst-Hofstee Y."/>
            <person name="McKinney R.A."/>
            <person name="Orlowski J."/>
        </authorList>
    </citation>
    <scope>VARIANT MRXSCH ARG-218</scope>
    <scope>CHARACTERIZATION OF VARIANT MRXSCH ARG-218</scope>
    <scope>SUBUNIT</scope>
    <scope>SUBCELLULAR LOCATION</scope>
    <scope>UBIQUITINATION</scope>
</reference>
<reference key="19">
    <citation type="journal article" date="2019" name="ENeuro">
        <title>Functional Assessment In Vivo of the Mouse Homolog of the Human Ala-9-Ser NHE6 Variant.</title>
        <authorList>
            <person name="Ouyang Q."/>
            <person name="Joesch-Cohen L."/>
            <person name="Mishra S."/>
            <person name="Riaz H.A."/>
            <person name="Schmidt M."/>
            <person name="Morrow E.M."/>
        </authorList>
    </citation>
    <scope>VARIANT SER-9</scope>
    <scope>CHARACTERIZATION OF VARIANT SER-9</scope>
    <scope>FUNCTION</scope>
</reference>
<reference key="20">
    <citation type="journal article" date="2020" name="J. Biol. Chem.">
        <title>Assorted dysfunctions of endosomal alkali cation/proton exchanger SLC9A6 variants linked to Christianson syndrome.</title>
        <authorList>
            <person name="Ilie A."/>
            <person name="Boucher A."/>
            <person name="Park J."/>
            <person name="Berghuis A.M."/>
            <person name="McKinney R.A."/>
            <person name="Orlowski J."/>
        </authorList>
    </citation>
    <scope>VARIANTS MRXSCH PRO-188; ASP-383; 547-GLU--ALA-701 DEL AND 570-TRP--ALA-701 DEL</scope>
    <scope>CHARACTERIZATION OF VARIANTS MRXSCH PRO-188; ASP-383; 547-GLU--ALA-701 DEL AND 570-TRP--ALA-701 DEL</scope>
    <scope>SUBCELLULAR LOCATION</scope>
    <scope>GLYCOSYLATION</scope>
    <scope>SUBUNIT</scope>
    <scope>FUNCTION</scope>
    <scope>VARIANTS SER-9 AND GLN-568</scope>
    <scope>CHARACTERIZATION OF VARIANTS SER-9 AND GLN-568</scope>
</reference>
<organism>
    <name type="scientific">Homo sapiens</name>
    <name type="common">Human</name>
    <dbReference type="NCBI Taxonomy" id="9606"/>
    <lineage>
        <taxon>Eukaryota</taxon>
        <taxon>Metazoa</taxon>
        <taxon>Chordata</taxon>
        <taxon>Craniata</taxon>
        <taxon>Vertebrata</taxon>
        <taxon>Euteleostomi</taxon>
        <taxon>Mammalia</taxon>
        <taxon>Eutheria</taxon>
        <taxon>Euarchontoglires</taxon>
        <taxon>Primates</taxon>
        <taxon>Haplorrhini</taxon>
        <taxon>Catarrhini</taxon>
        <taxon>Hominidae</taxon>
        <taxon>Homo</taxon>
    </lineage>
</organism>
<proteinExistence type="evidence at protein level"/>
<evidence type="ECO:0000250" key="1">
    <source>
        <dbReference type="UniProtKB" id="A1L3P4"/>
    </source>
</evidence>
<evidence type="ECO:0000255" key="2"/>
<evidence type="ECO:0000269" key="3">
    <source>
    </source>
</evidence>
<evidence type="ECO:0000269" key="4">
    <source>
    </source>
</evidence>
<evidence type="ECO:0000269" key="5">
    <source>
    </source>
</evidence>
<evidence type="ECO:0000269" key="6">
    <source>
    </source>
</evidence>
<evidence type="ECO:0000269" key="7">
    <source>
    </source>
</evidence>
<evidence type="ECO:0000269" key="8">
    <source>
    </source>
</evidence>
<evidence type="ECO:0000269" key="9">
    <source>
    </source>
</evidence>
<evidence type="ECO:0000269" key="10">
    <source>
    </source>
</evidence>
<evidence type="ECO:0000269" key="11">
    <source>
    </source>
</evidence>
<evidence type="ECO:0000269" key="12">
    <source>
    </source>
</evidence>
<evidence type="ECO:0000269" key="13">
    <source>
    </source>
</evidence>
<evidence type="ECO:0000269" key="14">
    <source>
    </source>
</evidence>
<evidence type="ECO:0000269" key="15">
    <source>
    </source>
</evidence>
<evidence type="ECO:0000269" key="16">
    <source>
    </source>
</evidence>
<evidence type="ECO:0000269" key="17">
    <source>
    </source>
</evidence>
<evidence type="ECO:0000303" key="18">
    <source>
    </source>
</evidence>
<evidence type="ECO:0000303" key="19">
    <source>
    </source>
</evidence>
<evidence type="ECO:0000303" key="20">
    <source>
    </source>
</evidence>
<evidence type="ECO:0000303" key="21">
    <source>
    </source>
</evidence>
<evidence type="ECO:0000303" key="22">
    <source>
    </source>
</evidence>
<evidence type="ECO:0000305" key="23"/>
<evidence type="ECO:0000305" key="24">
    <source>
    </source>
</evidence>
<evidence type="ECO:0000305" key="25">
    <source>
    </source>
</evidence>
<evidence type="ECO:0000305" key="26">
    <source>
    </source>
</evidence>
<evidence type="ECO:0000312" key="27">
    <source>
        <dbReference type="HGNC" id="HGNC:11079"/>
    </source>
</evidence>
<gene>
    <name evidence="27" type="primary">SLC9A6</name>
    <name type="synonym">KIAA0267</name>
    <name type="synonym">NHE6</name>
</gene>
<dbReference type="EMBL" id="AF030409">
    <property type="protein sequence ID" value="AAC39643.1"/>
    <property type="molecule type" value="mRNA"/>
</dbReference>
<dbReference type="EMBL" id="AK289775">
    <property type="protein sequence ID" value="BAF82464.1"/>
    <property type="molecule type" value="mRNA"/>
</dbReference>
<dbReference type="EMBL" id="AK300475">
    <property type="protein sequence ID" value="BAG62192.1"/>
    <property type="molecule type" value="mRNA"/>
</dbReference>
<dbReference type="EMBL" id="AK316255">
    <property type="protein sequence ID" value="BAH14626.1"/>
    <property type="molecule type" value="mRNA"/>
</dbReference>
<dbReference type="EMBL" id="AL732579">
    <property type="status" value="NOT_ANNOTATED_CDS"/>
    <property type="molecule type" value="Genomic_DNA"/>
</dbReference>
<dbReference type="EMBL" id="BC035029">
    <property type="protein sequence ID" value="AAH35029.1"/>
    <property type="molecule type" value="mRNA"/>
</dbReference>
<dbReference type="EMBL" id="BC049169">
    <property type="protein sequence ID" value="AAH49169.1"/>
    <property type="molecule type" value="mRNA"/>
</dbReference>
<dbReference type="EMBL" id="D87743">
    <property type="protein sequence ID" value="BAA13449.1"/>
    <property type="molecule type" value="mRNA"/>
</dbReference>
<dbReference type="EMBL" id="AB074255">
    <property type="protein sequence ID" value="BAB72002.1"/>
    <property type="molecule type" value="mRNA"/>
</dbReference>
<dbReference type="CCDS" id="CCDS14654.1">
    <molecule id="Q92581-1"/>
</dbReference>
<dbReference type="CCDS" id="CCDS44003.1">
    <molecule id="Q92581-2"/>
</dbReference>
<dbReference type="CCDS" id="CCDS55504.1">
    <molecule id="Q92581-3"/>
</dbReference>
<dbReference type="RefSeq" id="NP_001036002.1">
    <molecule id="Q92581-2"/>
    <property type="nucleotide sequence ID" value="NM_001042537.2"/>
</dbReference>
<dbReference type="RefSeq" id="NP_001171122.1">
    <molecule id="Q92581-3"/>
    <property type="nucleotide sequence ID" value="NM_001177651.2"/>
</dbReference>
<dbReference type="RefSeq" id="NP_001387838.1">
    <molecule id="Q92581-3"/>
    <property type="nucleotide sequence ID" value="NM_001400909.1"/>
</dbReference>
<dbReference type="RefSeq" id="NP_001387839.1">
    <molecule id="Q92581-3"/>
    <property type="nucleotide sequence ID" value="NM_001400910.1"/>
</dbReference>
<dbReference type="RefSeq" id="NP_001387840.1">
    <molecule id="Q92581-3"/>
    <property type="nucleotide sequence ID" value="NM_001400911.1"/>
</dbReference>
<dbReference type="RefSeq" id="NP_001387841.1">
    <molecule id="Q92581-3"/>
    <property type="nucleotide sequence ID" value="NM_001400912.1"/>
</dbReference>
<dbReference type="RefSeq" id="NP_006350.1">
    <molecule id="Q92581-1"/>
    <property type="nucleotide sequence ID" value="NM_006359.3"/>
</dbReference>
<dbReference type="RefSeq" id="XP_006724789.1">
    <property type="nucleotide sequence ID" value="XM_006724726.3"/>
</dbReference>
<dbReference type="RefSeq" id="XP_016884712.1">
    <property type="nucleotide sequence ID" value="XM_017029223.1"/>
</dbReference>
<dbReference type="RefSeq" id="XP_016884713.1">
    <property type="nucleotide sequence ID" value="XM_017029224.1"/>
</dbReference>
<dbReference type="SMR" id="Q92581"/>
<dbReference type="BioGRID" id="115742">
    <property type="interactions" value="45"/>
</dbReference>
<dbReference type="FunCoup" id="Q92581">
    <property type="interactions" value="1464"/>
</dbReference>
<dbReference type="IntAct" id="Q92581">
    <property type="interactions" value="43"/>
</dbReference>
<dbReference type="STRING" id="9606.ENSP00000359729"/>
<dbReference type="TCDB" id="2.A.36.1.14">
    <property type="family name" value="the monovalent cation:proton antiporter-1 (cpa1) family"/>
</dbReference>
<dbReference type="GlyCosmos" id="Q92581">
    <property type="glycosylation" value="1 site, No reported glycans"/>
</dbReference>
<dbReference type="GlyGen" id="Q92581">
    <property type="glycosylation" value="1 site"/>
</dbReference>
<dbReference type="iPTMnet" id="Q92581"/>
<dbReference type="PhosphoSitePlus" id="Q92581"/>
<dbReference type="SwissPalm" id="Q92581"/>
<dbReference type="BioMuta" id="SLC9A6"/>
<dbReference type="DMDM" id="6919937"/>
<dbReference type="jPOST" id="Q92581"/>
<dbReference type="MassIVE" id="Q92581"/>
<dbReference type="PaxDb" id="9606-ENSP00000359729"/>
<dbReference type="PeptideAtlas" id="Q92581"/>
<dbReference type="PRIDE" id="Q8WYK8"/>
<dbReference type="ProteomicsDB" id="63023"/>
<dbReference type="ProteomicsDB" id="75339">
    <molecule id="Q92581-1"/>
</dbReference>
<dbReference type="ProteomicsDB" id="75340">
    <molecule id="Q92581-2"/>
</dbReference>
<dbReference type="Pumba" id="Q92581"/>
<dbReference type="Antibodypedia" id="30408">
    <property type="antibodies" value="157 antibodies from 26 providers"/>
</dbReference>
<dbReference type="DNASU" id="10479"/>
<dbReference type="Ensembl" id="ENST00000370695.8">
    <molecule id="Q92581-2"/>
    <property type="protein sequence ID" value="ENSP00000359729.4"/>
    <property type="gene ID" value="ENSG00000198689.13"/>
</dbReference>
<dbReference type="Ensembl" id="ENST00000370698.7">
    <molecule id="Q92581-1"/>
    <property type="protein sequence ID" value="ENSP00000359732.3"/>
    <property type="gene ID" value="ENSG00000198689.13"/>
</dbReference>
<dbReference type="Ensembl" id="ENST00000370701.6">
    <molecule id="Q92581-3"/>
    <property type="protein sequence ID" value="ENSP00000359735.1"/>
    <property type="gene ID" value="ENSG00000198689.13"/>
</dbReference>
<dbReference type="Ensembl" id="ENST00000636092.1">
    <molecule id="Q92581-3"/>
    <property type="protein sequence ID" value="ENSP00000490406.1"/>
    <property type="gene ID" value="ENSG00000198689.13"/>
</dbReference>
<dbReference type="Ensembl" id="ENST00000636347.1">
    <molecule id="Q92581-3"/>
    <property type="protein sequence ID" value="ENSP00000490648.1"/>
    <property type="gene ID" value="ENSG00000198689.13"/>
</dbReference>
<dbReference type="Ensembl" id="ENST00000637234.1">
    <molecule id="Q92581-3"/>
    <property type="protein sequence ID" value="ENSP00000490527.1"/>
    <property type="gene ID" value="ENSG00000198689.13"/>
</dbReference>
<dbReference type="Ensembl" id="ENST00000637581.1">
    <molecule id="Q92581-3"/>
    <property type="protein sequence ID" value="ENSP00000490731.1"/>
    <property type="gene ID" value="ENSG00000198689.13"/>
</dbReference>
<dbReference type="GeneID" id="10479"/>
<dbReference type="KEGG" id="hsa:10479"/>
<dbReference type="UCSC" id="uc004ezj.3">
    <molecule id="Q92581-2"/>
    <property type="organism name" value="human"/>
</dbReference>
<dbReference type="AGR" id="HGNC:11079"/>
<dbReference type="CTD" id="10479"/>
<dbReference type="DisGeNET" id="10479"/>
<dbReference type="GeneCards" id="SLC9A6"/>
<dbReference type="GeneReviews" id="SLC9A6"/>
<dbReference type="HGNC" id="HGNC:11079">
    <property type="gene designation" value="SLC9A6"/>
</dbReference>
<dbReference type="HPA" id="ENSG00000198689">
    <property type="expression patterns" value="Tissue enhanced (brain)"/>
</dbReference>
<dbReference type="MalaCards" id="SLC9A6"/>
<dbReference type="MIM" id="300231">
    <property type="type" value="gene"/>
</dbReference>
<dbReference type="MIM" id="300243">
    <property type="type" value="phenotype"/>
</dbReference>
<dbReference type="neXtProt" id="NX_Q92581"/>
<dbReference type="OpenTargets" id="ENSG00000198689"/>
<dbReference type="Orphanet" id="85278">
    <property type="disease" value="Christianson syndrome"/>
</dbReference>
<dbReference type="PharmGKB" id="PA35935"/>
<dbReference type="VEuPathDB" id="HostDB:ENSG00000198689"/>
<dbReference type="eggNOG" id="KOG1965">
    <property type="taxonomic scope" value="Eukaryota"/>
</dbReference>
<dbReference type="GeneTree" id="ENSGT00940000153460"/>
<dbReference type="HOGENOM" id="CLU_005912_7_0_1"/>
<dbReference type="InParanoid" id="Q92581"/>
<dbReference type="OrthoDB" id="196264at2759"/>
<dbReference type="PAN-GO" id="Q92581">
    <property type="GO annotations" value="7 GO annotations based on evolutionary models"/>
</dbReference>
<dbReference type="PhylomeDB" id="Q92581"/>
<dbReference type="TreeFam" id="TF318755"/>
<dbReference type="PathwayCommons" id="Q92581"/>
<dbReference type="Reactome" id="R-HSA-425986">
    <property type="pathway name" value="Sodium/Proton exchangers"/>
</dbReference>
<dbReference type="Reactome" id="R-HSA-5619092">
    <property type="pathway name" value="Defective SLC9A6 causes X-linked, syndromic mental retardation, Christianson type (MRXSCH)"/>
</dbReference>
<dbReference type="SignaLink" id="Q92581"/>
<dbReference type="SIGNOR" id="Q92581"/>
<dbReference type="BioGRID-ORCS" id="10479">
    <property type="hits" value="10 hits in 780 CRISPR screens"/>
</dbReference>
<dbReference type="ChiTaRS" id="SLC9A6">
    <property type="organism name" value="human"/>
</dbReference>
<dbReference type="GeneWiki" id="SLC9A6"/>
<dbReference type="GenomeRNAi" id="10479"/>
<dbReference type="Pharos" id="Q92581">
    <property type="development level" value="Tbio"/>
</dbReference>
<dbReference type="PRO" id="PR:Q92581"/>
<dbReference type="Proteomes" id="UP000005640">
    <property type="component" value="Chromosome X"/>
</dbReference>
<dbReference type="RNAct" id="Q92581">
    <property type="molecule type" value="protein"/>
</dbReference>
<dbReference type="Bgee" id="ENSG00000198689">
    <property type="expression patterns" value="Expressed in lateral nuclear group of thalamus and 203 other cell types or tissues"/>
</dbReference>
<dbReference type="ExpressionAtlas" id="Q92581">
    <property type="expression patterns" value="baseline and differential"/>
</dbReference>
<dbReference type="GO" id="GO:0031901">
    <property type="term" value="C:early endosome membrane"/>
    <property type="evidence" value="ECO:0000314"/>
    <property type="project" value="UniProtKB"/>
</dbReference>
<dbReference type="GO" id="GO:0005789">
    <property type="term" value="C:endoplasmic reticulum membrane"/>
    <property type="evidence" value="ECO:0000314"/>
    <property type="project" value="UniProtKB"/>
</dbReference>
<dbReference type="GO" id="GO:0043231">
    <property type="term" value="C:intracellular membrane-bounded organelle"/>
    <property type="evidence" value="ECO:0000314"/>
    <property type="project" value="HPA"/>
</dbReference>
<dbReference type="GO" id="GO:0031902">
    <property type="term" value="C:late endosome membrane"/>
    <property type="evidence" value="ECO:0007669"/>
    <property type="project" value="UniProtKB-SubCell"/>
</dbReference>
<dbReference type="GO" id="GO:0005886">
    <property type="term" value="C:plasma membrane"/>
    <property type="evidence" value="ECO:0000314"/>
    <property type="project" value="HPA"/>
</dbReference>
<dbReference type="GO" id="GO:0055037">
    <property type="term" value="C:recycling endosome"/>
    <property type="evidence" value="ECO:0000318"/>
    <property type="project" value="GO_Central"/>
</dbReference>
<dbReference type="GO" id="GO:0055038">
    <property type="term" value="C:recycling endosome membrane"/>
    <property type="evidence" value="ECO:0000314"/>
    <property type="project" value="UniProtKB"/>
</dbReference>
<dbReference type="GO" id="GO:0042802">
    <property type="term" value="F:identical protein binding"/>
    <property type="evidence" value="ECO:0000314"/>
    <property type="project" value="UniProtKB"/>
</dbReference>
<dbReference type="GO" id="GO:0015386">
    <property type="term" value="F:potassium:proton antiporter activity"/>
    <property type="evidence" value="ECO:0000318"/>
    <property type="project" value="GO_Central"/>
</dbReference>
<dbReference type="GO" id="GO:0015385">
    <property type="term" value="F:sodium:proton antiporter activity"/>
    <property type="evidence" value="ECO:0000318"/>
    <property type="project" value="GO_Central"/>
</dbReference>
<dbReference type="GO" id="GO:0048675">
    <property type="term" value="P:axon extension"/>
    <property type="evidence" value="ECO:0000314"/>
    <property type="project" value="MGI"/>
</dbReference>
<dbReference type="GO" id="GO:0097484">
    <property type="term" value="P:dendrite extension"/>
    <property type="evidence" value="ECO:0000314"/>
    <property type="project" value="MGI"/>
</dbReference>
<dbReference type="GO" id="GO:0030010">
    <property type="term" value="P:establishment of cell polarity"/>
    <property type="evidence" value="ECO:0000315"/>
    <property type="project" value="UniProtKB"/>
</dbReference>
<dbReference type="GO" id="GO:0006811">
    <property type="term" value="P:monoatomic ion transport"/>
    <property type="evidence" value="ECO:0000304"/>
    <property type="project" value="Reactome"/>
</dbReference>
<dbReference type="GO" id="GO:0048812">
    <property type="term" value="P:neuron projection morphogenesis"/>
    <property type="evidence" value="ECO:0000314"/>
    <property type="project" value="MGI"/>
</dbReference>
<dbReference type="GO" id="GO:0071805">
    <property type="term" value="P:potassium ion transmembrane transport"/>
    <property type="evidence" value="ECO:0000318"/>
    <property type="project" value="GO_Central"/>
</dbReference>
<dbReference type="GO" id="GO:0051453">
    <property type="term" value="P:regulation of intracellular pH"/>
    <property type="evidence" value="ECO:0000314"/>
    <property type="project" value="UniProtKB"/>
</dbReference>
<dbReference type="GO" id="GO:0098719">
    <property type="term" value="P:sodium ion import across plasma membrane"/>
    <property type="evidence" value="ECO:0000318"/>
    <property type="project" value="GO_Central"/>
</dbReference>
<dbReference type="Gene3D" id="6.10.140.1330">
    <property type="match status" value="1"/>
</dbReference>
<dbReference type="InterPro" id="IPR018422">
    <property type="entry name" value="Cation/H_exchanger_CPA1"/>
</dbReference>
<dbReference type="InterPro" id="IPR006153">
    <property type="entry name" value="Cation/H_exchanger_TM"/>
</dbReference>
<dbReference type="InterPro" id="IPR004709">
    <property type="entry name" value="NaH_exchanger"/>
</dbReference>
<dbReference type="InterPro" id="IPR002090">
    <property type="entry name" value="NHE-6/7/9"/>
</dbReference>
<dbReference type="NCBIfam" id="TIGR00840">
    <property type="entry name" value="b_cpa1"/>
    <property type="match status" value="1"/>
</dbReference>
<dbReference type="PANTHER" id="PTHR10110">
    <property type="entry name" value="SODIUM/HYDROGEN EXCHANGER"/>
    <property type="match status" value="1"/>
</dbReference>
<dbReference type="PANTHER" id="PTHR10110:SF94">
    <property type="entry name" value="SODIUM_HYDROGEN EXCHANGER 6"/>
    <property type="match status" value="1"/>
</dbReference>
<dbReference type="Pfam" id="PF00999">
    <property type="entry name" value="Na_H_Exchanger"/>
    <property type="match status" value="1"/>
</dbReference>
<dbReference type="PRINTS" id="PR01084">
    <property type="entry name" value="NAHEXCHNGR"/>
</dbReference>
<dbReference type="PRINTS" id="PR01088">
    <property type="entry name" value="NAHEXCHNGR6"/>
</dbReference>
<protein>
    <recommendedName>
        <fullName>Sodium/hydrogen exchanger 6</fullName>
    </recommendedName>
    <alternativeName>
        <fullName>Na(+)/H(+) exchanger 6</fullName>
        <shortName>NHE-6</shortName>
    </alternativeName>
    <alternativeName>
        <fullName>Solute carrier family 9 member 6</fullName>
    </alternativeName>
</protein>
<sequence length="701" mass="77917">MARRGWRRAPLRRGVGSSPRARRLMRPLWLLLAVGVFDWAGASDGGGGEARAMDEEIVSEKQAEESHRQDSANLLIFILLLTLTILTIWLFKHRRARFLHETGLAMIYGLLVGLVLRYGIHVPSDVNNVTLSCEVQSSPTTLLVNVSGKFYEYMLKGEISSHELNNVQDNEMLRKVTFDPEVFFNILLPPIIFYAGYSLKRRHFFRNLGSILAYAFLGTAISCFVIGSIMYGCVTLMKVTGQLAGDFYFTDCLLFGAIVSATDPVTVLAIFHELQVDVELYALLFGESVLNDAVAIVLSSSIVAYQPAGDNSHTFDVTAMFKSIGIFLGIFSGSFAMGAATGVVTALVTKFTKLREFQLLETGLFFLMSWSTFLLAEAWGFTGVVAVLFCGITQAHYTYNNLSTESQHRTKQLFELLNFLAENFIFSYMGLTLFTFQNHVFNPTFVVGAFVAIFLGRAANIYPLSLLLNLGRRSKIGSNFQHMMMFAGLRGAMAFALAIRDTATYARQMMFSTTLLIVFFTVWVFGGGTTAMLSCLHIRVGVDSDQEHLGVPENERRTTKAESAWLFRMWYNFDHNYLKPLLTHSGPPLTTTLPACCGPIARCLTSPQAYENQEQLKDDDSDLILNDGDISLTYGDSTVNTEPATSSAPRRFMGNSSEDALDRELAFGDHELVIRGTRLVLPMDDSEPPLNLLDNTRHGPA</sequence>
<keyword id="KW-0025">Alternative splicing</keyword>
<keyword id="KW-0050">Antiport</keyword>
<keyword id="KW-1003">Cell membrane</keyword>
<keyword id="KW-0225">Disease variant</keyword>
<keyword id="KW-0967">Endosome</keyword>
<keyword id="KW-0887">Epilepsy</keyword>
<keyword id="KW-0325">Glycoprotein</keyword>
<keyword id="KW-0991">Intellectual disability</keyword>
<keyword id="KW-0406">Ion transport</keyword>
<keyword id="KW-1017">Isopeptide bond</keyword>
<keyword id="KW-0472">Membrane</keyword>
<keyword id="KW-1267">Proteomics identification</keyword>
<keyword id="KW-1185">Reference proteome</keyword>
<keyword id="KW-0915">Sodium</keyword>
<keyword id="KW-0739">Sodium transport</keyword>
<keyword id="KW-0812">Transmembrane</keyword>
<keyword id="KW-1133">Transmembrane helix</keyword>
<keyword id="KW-0813">Transport</keyword>
<keyword id="KW-0832">Ubl conjugation</keyword>